<proteinExistence type="inferred from homology"/>
<gene>
    <name evidence="1" type="primary">gpmA</name>
    <name type="synonym">gpm</name>
    <name type="ordered locus">BRA1052</name>
    <name type="ordered locus">BS1330_II1044</name>
</gene>
<protein>
    <recommendedName>
        <fullName evidence="1">2,3-bisphosphoglycerate-dependent phosphoglycerate mutase</fullName>
        <shortName evidence="1">BPG-dependent PGAM</shortName>
        <shortName evidence="1">PGAM</shortName>
        <shortName evidence="1">Phosphoglyceromutase</shortName>
        <shortName evidence="1">dPGM</shortName>
        <ecNumber evidence="1">5.4.2.11</ecNumber>
    </recommendedName>
</protein>
<comment type="function">
    <text evidence="1">Catalyzes the interconversion of 2-phosphoglycerate and 3-phosphoglycerate.</text>
</comment>
<comment type="catalytic activity">
    <reaction evidence="1">
        <text>(2R)-2-phosphoglycerate = (2R)-3-phosphoglycerate</text>
        <dbReference type="Rhea" id="RHEA:15901"/>
        <dbReference type="ChEBI" id="CHEBI:58272"/>
        <dbReference type="ChEBI" id="CHEBI:58289"/>
        <dbReference type="EC" id="5.4.2.11"/>
    </reaction>
</comment>
<comment type="pathway">
    <text evidence="1">Carbohydrate degradation; glycolysis; pyruvate from D-glyceraldehyde 3-phosphate: step 3/5.</text>
</comment>
<comment type="subunit">
    <text evidence="1">Homodimer.</text>
</comment>
<comment type="similarity">
    <text evidence="1">Belongs to the phosphoglycerate mutase family. BPG-dependent PGAM subfamily.</text>
</comment>
<name>GPMA_BRUSU</name>
<feature type="chain" id="PRO_0000179857" description="2,3-bisphosphoglycerate-dependent phosphoglycerate mutase">
    <location>
        <begin position="1"/>
        <end position="206"/>
    </location>
</feature>
<feature type="active site" description="Tele-phosphohistidine intermediate" evidence="1">
    <location>
        <position position="10"/>
    </location>
</feature>
<feature type="active site" description="Proton donor/acceptor" evidence="1">
    <location>
        <position position="88"/>
    </location>
</feature>
<feature type="binding site" evidence="1">
    <location>
        <begin position="9"/>
        <end position="16"/>
    </location>
    <ligand>
        <name>substrate</name>
    </ligand>
</feature>
<feature type="binding site" evidence="1">
    <location>
        <begin position="22"/>
        <end position="23"/>
    </location>
    <ligand>
        <name>substrate</name>
    </ligand>
</feature>
<feature type="binding site" evidence="1">
    <location>
        <position position="61"/>
    </location>
    <ligand>
        <name>substrate</name>
    </ligand>
</feature>
<feature type="binding site" evidence="1">
    <location>
        <begin position="88"/>
        <end position="91"/>
    </location>
    <ligand>
        <name>substrate</name>
    </ligand>
</feature>
<feature type="binding site" evidence="1">
    <location>
        <position position="99"/>
    </location>
    <ligand>
        <name>substrate</name>
    </ligand>
</feature>
<feature type="binding site" evidence="1">
    <location>
        <begin position="115"/>
        <end position="116"/>
    </location>
    <ligand>
        <name>substrate</name>
    </ligand>
</feature>
<feature type="binding site" evidence="1">
    <location>
        <begin position="159"/>
        <end position="160"/>
    </location>
    <ligand>
        <name>substrate</name>
    </ligand>
</feature>
<feature type="site" description="Transition state stabilizer" evidence="1">
    <location>
        <position position="158"/>
    </location>
</feature>
<dbReference type="EC" id="5.4.2.11" evidence="1"/>
<dbReference type="EMBL" id="AE014292">
    <property type="protein sequence ID" value="AAN34219.1"/>
    <property type="molecule type" value="Genomic_DNA"/>
</dbReference>
<dbReference type="EMBL" id="CP002998">
    <property type="protein sequence ID" value="AEM20496.1"/>
    <property type="molecule type" value="Genomic_DNA"/>
</dbReference>
<dbReference type="RefSeq" id="WP_002965600.1">
    <property type="nucleotide sequence ID" value="NZ_KN046805.1"/>
</dbReference>
<dbReference type="SMR" id="P59160"/>
<dbReference type="KEGG" id="bms:BRA1052"/>
<dbReference type="KEGG" id="bsi:BS1330_II1044"/>
<dbReference type="PATRIC" id="fig|204722.21.peg.1068"/>
<dbReference type="HOGENOM" id="CLU_033323_1_4_5"/>
<dbReference type="PhylomeDB" id="P59160"/>
<dbReference type="UniPathway" id="UPA00109">
    <property type="reaction ID" value="UER00186"/>
</dbReference>
<dbReference type="Proteomes" id="UP000007104">
    <property type="component" value="Chromosome II"/>
</dbReference>
<dbReference type="GO" id="GO:0004619">
    <property type="term" value="F:phosphoglycerate mutase activity"/>
    <property type="evidence" value="ECO:0007669"/>
    <property type="project" value="UniProtKB-EC"/>
</dbReference>
<dbReference type="GO" id="GO:0006094">
    <property type="term" value="P:gluconeogenesis"/>
    <property type="evidence" value="ECO:0007669"/>
    <property type="project" value="UniProtKB-UniRule"/>
</dbReference>
<dbReference type="GO" id="GO:0006096">
    <property type="term" value="P:glycolytic process"/>
    <property type="evidence" value="ECO:0007669"/>
    <property type="project" value="UniProtKB-UniRule"/>
</dbReference>
<dbReference type="CDD" id="cd07067">
    <property type="entry name" value="HP_PGM_like"/>
    <property type="match status" value="1"/>
</dbReference>
<dbReference type="Gene3D" id="3.40.50.1240">
    <property type="entry name" value="Phosphoglycerate mutase-like"/>
    <property type="match status" value="1"/>
</dbReference>
<dbReference type="HAMAP" id="MF_01039">
    <property type="entry name" value="PGAM_GpmA"/>
    <property type="match status" value="1"/>
</dbReference>
<dbReference type="InterPro" id="IPR013078">
    <property type="entry name" value="His_Pase_superF_clade-1"/>
</dbReference>
<dbReference type="InterPro" id="IPR029033">
    <property type="entry name" value="His_PPase_superfam"/>
</dbReference>
<dbReference type="InterPro" id="IPR001345">
    <property type="entry name" value="PG/BPGM_mutase_AS"/>
</dbReference>
<dbReference type="InterPro" id="IPR005952">
    <property type="entry name" value="Phosphogly_mut1"/>
</dbReference>
<dbReference type="NCBIfam" id="TIGR01258">
    <property type="entry name" value="pgm_1"/>
    <property type="match status" value="1"/>
</dbReference>
<dbReference type="NCBIfam" id="NF002339">
    <property type="entry name" value="PRK01295.1"/>
    <property type="match status" value="1"/>
</dbReference>
<dbReference type="PANTHER" id="PTHR11931">
    <property type="entry name" value="PHOSPHOGLYCERATE MUTASE"/>
    <property type="match status" value="1"/>
</dbReference>
<dbReference type="Pfam" id="PF00300">
    <property type="entry name" value="His_Phos_1"/>
    <property type="match status" value="1"/>
</dbReference>
<dbReference type="PIRSF" id="PIRSF000709">
    <property type="entry name" value="6PFK_2-Ptase"/>
    <property type="match status" value="1"/>
</dbReference>
<dbReference type="SMART" id="SM00855">
    <property type="entry name" value="PGAM"/>
    <property type="match status" value="1"/>
</dbReference>
<dbReference type="SUPFAM" id="SSF53254">
    <property type="entry name" value="Phosphoglycerate mutase-like"/>
    <property type="match status" value="1"/>
</dbReference>
<dbReference type="PROSITE" id="PS00175">
    <property type="entry name" value="PG_MUTASE"/>
    <property type="match status" value="1"/>
</dbReference>
<reference key="1">
    <citation type="journal article" date="2002" name="Proc. Natl. Acad. Sci. U.S.A.">
        <title>The Brucella suis genome reveals fundamental similarities between animal and plant pathogens and symbionts.</title>
        <authorList>
            <person name="Paulsen I.T."/>
            <person name="Seshadri R."/>
            <person name="Nelson K.E."/>
            <person name="Eisen J.A."/>
            <person name="Heidelberg J.F."/>
            <person name="Read T.D."/>
            <person name="Dodson R.J."/>
            <person name="Umayam L.A."/>
            <person name="Brinkac L.M."/>
            <person name="Beanan M.J."/>
            <person name="Daugherty S.C."/>
            <person name="DeBoy R.T."/>
            <person name="Durkin A.S."/>
            <person name="Kolonay J.F."/>
            <person name="Madupu R."/>
            <person name="Nelson W.C."/>
            <person name="Ayodeji B."/>
            <person name="Kraul M."/>
            <person name="Shetty J."/>
            <person name="Malek J.A."/>
            <person name="Van Aken S.E."/>
            <person name="Riedmuller S."/>
            <person name="Tettelin H."/>
            <person name="Gill S.R."/>
            <person name="White O."/>
            <person name="Salzberg S.L."/>
            <person name="Hoover D.L."/>
            <person name="Lindler L.E."/>
            <person name="Halling S.M."/>
            <person name="Boyle S.M."/>
            <person name="Fraser C.M."/>
        </authorList>
    </citation>
    <scope>NUCLEOTIDE SEQUENCE [LARGE SCALE GENOMIC DNA]</scope>
    <source>
        <strain>1330</strain>
    </source>
</reference>
<reference key="2">
    <citation type="journal article" date="2011" name="J. Bacteriol.">
        <title>Revised genome sequence of Brucella suis 1330.</title>
        <authorList>
            <person name="Tae H."/>
            <person name="Shallom S."/>
            <person name="Settlage R."/>
            <person name="Preston D."/>
            <person name="Adams L.G."/>
            <person name="Garner H.R."/>
        </authorList>
    </citation>
    <scope>NUCLEOTIDE SEQUENCE [LARGE SCALE GENOMIC DNA]</scope>
    <source>
        <strain>1330</strain>
    </source>
</reference>
<keyword id="KW-0312">Gluconeogenesis</keyword>
<keyword id="KW-0324">Glycolysis</keyword>
<keyword id="KW-0413">Isomerase</keyword>
<organism>
    <name type="scientific">Brucella suis biovar 1 (strain 1330)</name>
    <dbReference type="NCBI Taxonomy" id="204722"/>
    <lineage>
        <taxon>Bacteria</taxon>
        <taxon>Pseudomonadati</taxon>
        <taxon>Pseudomonadota</taxon>
        <taxon>Alphaproteobacteria</taxon>
        <taxon>Hyphomicrobiales</taxon>
        <taxon>Brucellaceae</taxon>
        <taxon>Brucella/Ochrobactrum group</taxon>
        <taxon>Brucella</taxon>
    </lineage>
</organism>
<evidence type="ECO:0000255" key="1">
    <source>
        <dbReference type="HAMAP-Rule" id="MF_01039"/>
    </source>
</evidence>
<accession>P59160</accession>
<accession>G0KE58</accession>
<sequence>MSRTLVLVRHGQSEWNLKNLFTGWRDPGLTEQGHAEAKAAGQRLKAAGLKFDIAYTSALSRAQVTCQHILDELGQPGLETIRDQALNERDYGDLSGLNKDDARAKWGEEQVHIWRRSYDVPPPGGESLKDTGARVWPYYLHTIQPHVLREETVLVAAHGNSLRALIMALDGLTPEQILKQELNTGVPIIYRLNADSTVASKEILSA</sequence>